<organism>
    <name type="scientific">Homo sapiens</name>
    <name type="common">Human</name>
    <dbReference type="NCBI Taxonomy" id="9606"/>
    <lineage>
        <taxon>Eukaryota</taxon>
        <taxon>Metazoa</taxon>
        <taxon>Chordata</taxon>
        <taxon>Craniata</taxon>
        <taxon>Vertebrata</taxon>
        <taxon>Euteleostomi</taxon>
        <taxon>Mammalia</taxon>
        <taxon>Eutheria</taxon>
        <taxon>Euarchontoglires</taxon>
        <taxon>Primates</taxon>
        <taxon>Haplorrhini</taxon>
        <taxon>Catarrhini</taxon>
        <taxon>Hominidae</taxon>
        <taxon>Homo</taxon>
    </lineage>
</organism>
<comment type="function">
    <text evidence="6 7">May be involved in several stages of intracellular trafficking. Plays a role in protein transport from early to late endosomes. Plays a role in protein transport to the lysosome. Promotes degradation of EGFR after EGF signaling. Plays a role in intracellular transport of vesicular stomatitis virus nucleocapsids from the endosome to the cytoplasm.</text>
</comment>
<comment type="subunit">
    <text evidence="1">Homooligomer. Interacts with EGFR (By similarity).</text>
</comment>
<comment type="subcellular location">
    <subcellularLocation>
        <location>Early endosome membrane</location>
        <topology>Peripheral membrane protein</topology>
        <orientation>Cytoplasmic side</orientation>
    </subcellularLocation>
    <subcellularLocation>
        <location>Late endosome membrane</location>
        <topology>Peripheral membrane protein</topology>
        <orientation>Cytoplasmic side</orientation>
    </subcellularLocation>
    <subcellularLocation>
        <location evidence="1">Cytoplasm</location>
    </subcellularLocation>
    <subcellularLocation>
        <location evidence="1">Lysosome</location>
    </subcellularLocation>
</comment>
<comment type="alternative products">
    <event type="alternative splicing"/>
    <isoform>
        <id>P57768-1</id>
        <name>1</name>
        <sequence type="displayed"/>
    </isoform>
    <isoform>
        <id>P57768-2</id>
        <name>2</name>
        <sequence type="described" ref="VSP_042944"/>
    </isoform>
</comment>
<comment type="tissue specificity">
    <text evidence="6">Detected in placenta, lung, liver,heart and pancreas.</text>
</comment>
<comment type="domain">
    <text evidence="6">The PX domain mediates interaction with membranes enriched in phosphatidylinositol 3-phosphate.</text>
</comment>
<comment type="similarity">
    <text evidence="9">Belongs to the sorting nexin family.</text>
</comment>
<feature type="chain" id="PRO_0000213863" description="Sorting nexin-16">
    <location>
        <begin position="1"/>
        <end position="344"/>
    </location>
</feature>
<feature type="domain" description="PX" evidence="4">
    <location>
        <begin position="105"/>
        <end position="218"/>
    </location>
</feature>
<feature type="region of interest" description="Disordered" evidence="5">
    <location>
        <begin position="1"/>
        <end position="66"/>
    </location>
</feature>
<feature type="region of interest" description="Disordered" evidence="5">
    <location>
        <begin position="81"/>
        <end position="107"/>
    </location>
</feature>
<feature type="coiled-coil region" evidence="3">
    <location>
        <begin position="223"/>
        <end position="278"/>
    </location>
</feature>
<feature type="compositionally biased region" description="Pro residues" evidence="5">
    <location>
        <begin position="1"/>
        <end position="10"/>
    </location>
</feature>
<feature type="compositionally biased region" description="Polar residues" evidence="5">
    <location>
        <begin position="14"/>
        <end position="26"/>
    </location>
</feature>
<feature type="compositionally biased region" description="Low complexity" evidence="5">
    <location>
        <begin position="27"/>
        <end position="40"/>
    </location>
</feature>
<feature type="compositionally biased region" description="Polar residues" evidence="5">
    <location>
        <begin position="41"/>
        <end position="66"/>
    </location>
</feature>
<feature type="binding site" evidence="9">
    <location>
        <position position="144"/>
    </location>
    <ligand>
        <name>a 1,2-diacyl-sn-glycero-3-phospho-(1D-myo-inositol-3-phosphate)</name>
        <dbReference type="ChEBI" id="CHEBI:58088"/>
    </ligand>
</feature>
<feature type="binding site" evidence="1">
    <location>
        <position position="146"/>
    </location>
    <ligand>
        <name>a 1,2-diacyl-sn-glycero-3-phospho-(1D-myo-inositol-3-phosphate)</name>
        <dbReference type="ChEBI" id="CHEBI:58088"/>
    </ligand>
</feature>
<feature type="binding site" evidence="1">
    <location>
        <position position="184"/>
    </location>
    <ligand>
        <name>a 1,2-diacyl-sn-glycero-3-phospho-(1D-myo-inositol-3-phosphate)</name>
        <dbReference type="ChEBI" id="CHEBI:58088"/>
    </ligand>
</feature>
<feature type="modified residue" description="Phosphoserine" evidence="2">
    <location>
        <position position="222"/>
    </location>
</feature>
<feature type="splice variant" id="VSP_042944" description="In isoform 2." evidence="8">
    <location>
        <begin position="126"/>
        <end position="154"/>
    </location>
</feature>
<feature type="sequence variant" id="VAR_052479" description="In dbSNP:rs16919654.">
    <original>P</original>
    <variation>L</variation>
    <location>
        <position position="98"/>
    </location>
</feature>
<feature type="mutagenesis site" description="Abolishes binding to membranes enriched in phosphatidylinositol 3-phosphate." evidence="7">
    <original>R</original>
    <variation>A</variation>
    <location>
        <position position="144"/>
    </location>
</feature>
<feature type="mutagenesis site" description="Abolishes binding to phosphatidylinositol 3-phosphate." evidence="6">
    <original>Y</original>
    <variation>A</variation>
    <location>
        <position position="145"/>
    </location>
</feature>
<feature type="sequence conflict" description="In Ref. 1; AAG25676." evidence="9" ref="1">
    <original>LDEE</original>
    <variation>WMR</variation>
    <location>
        <begin position="308"/>
        <end position="311"/>
    </location>
</feature>
<feature type="strand" evidence="10">
    <location>
        <begin position="108"/>
        <end position="136"/>
    </location>
</feature>
<feature type="strand" evidence="10">
    <location>
        <begin position="138"/>
        <end position="144"/>
    </location>
</feature>
<feature type="helix" evidence="10">
    <location>
        <begin position="145"/>
        <end position="158"/>
    </location>
</feature>
<feature type="strand" evidence="11">
    <location>
        <begin position="160"/>
        <end position="162"/>
    </location>
</feature>
<feature type="strand" evidence="10">
    <location>
        <begin position="171"/>
        <end position="173"/>
    </location>
</feature>
<feature type="helix" evidence="10">
    <location>
        <begin position="178"/>
        <end position="197"/>
    </location>
</feature>
<feature type="helix" evidence="10">
    <location>
        <begin position="199"/>
        <end position="202"/>
    </location>
</feature>
<feature type="helix" evidence="10">
    <location>
        <begin position="205"/>
        <end position="211"/>
    </location>
</feature>
<feature type="strand" evidence="11">
    <location>
        <begin position="213"/>
        <end position="215"/>
    </location>
</feature>
<feature type="helix" evidence="10">
    <location>
        <begin position="222"/>
        <end position="229"/>
    </location>
</feature>
<feature type="helix" evidence="10">
    <location>
        <begin position="233"/>
        <end position="276"/>
    </location>
</feature>
<reference key="1">
    <citation type="submission" date="2000-09" db="EMBL/GenBank/DDBJ databases">
        <authorList>
            <person name="Hanson B.J."/>
            <person name="Hong W."/>
        </authorList>
    </citation>
    <scope>NUCLEOTIDE SEQUENCE [MRNA] (ISOFORM 1)</scope>
</reference>
<reference key="2">
    <citation type="journal article" date="2004" name="Nat. Genet.">
        <title>Complete sequencing and characterization of 21,243 full-length human cDNAs.</title>
        <authorList>
            <person name="Ota T."/>
            <person name="Suzuki Y."/>
            <person name="Nishikawa T."/>
            <person name="Otsuki T."/>
            <person name="Sugiyama T."/>
            <person name="Irie R."/>
            <person name="Wakamatsu A."/>
            <person name="Hayashi K."/>
            <person name="Sato H."/>
            <person name="Nagai K."/>
            <person name="Kimura K."/>
            <person name="Makita H."/>
            <person name="Sekine M."/>
            <person name="Obayashi M."/>
            <person name="Nishi T."/>
            <person name="Shibahara T."/>
            <person name="Tanaka T."/>
            <person name="Ishii S."/>
            <person name="Yamamoto J."/>
            <person name="Saito K."/>
            <person name="Kawai Y."/>
            <person name="Isono Y."/>
            <person name="Nakamura Y."/>
            <person name="Nagahari K."/>
            <person name="Murakami K."/>
            <person name="Yasuda T."/>
            <person name="Iwayanagi T."/>
            <person name="Wagatsuma M."/>
            <person name="Shiratori A."/>
            <person name="Sudo H."/>
            <person name="Hosoiri T."/>
            <person name="Kaku Y."/>
            <person name="Kodaira H."/>
            <person name="Kondo H."/>
            <person name="Sugawara M."/>
            <person name="Takahashi M."/>
            <person name="Kanda K."/>
            <person name="Yokoi T."/>
            <person name="Furuya T."/>
            <person name="Kikkawa E."/>
            <person name="Omura Y."/>
            <person name="Abe K."/>
            <person name="Kamihara K."/>
            <person name="Katsuta N."/>
            <person name="Sato K."/>
            <person name="Tanikawa M."/>
            <person name="Yamazaki M."/>
            <person name="Ninomiya K."/>
            <person name="Ishibashi T."/>
            <person name="Yamashita H."/>
            <person name="Murakawa K."/>
            <person name="Fujimori K."/>
            <person name="Tanai H."/>
            <person name="Kimata M."/>
            <person name="Watanabe M."/>
            <person name="Hiraoka S."/>
            <person name="Chiba Y."/>
            <person name="Ishida S."/>
            <person name="Ono Y."/>
            <person name="Takiguchi S."/>
            <person name="Watanabe S."/>
            <person name="Yosida M."/>
            <person name="Hotuta T."/>
            <person name="Kusano J."/>
            <person name="Kanehori K."/>
            <person name="Takahashi-Fujii A."/>
            <person name="Hara H."/>
            <person name="Tanase T.-O."/>
            <person name="Nomura Y."/>
            <person name="Togiya S."/>
            <person name="Komai F."/>
            <person name="Hara R."/>
            <person name="Takeuchi K."/>
            <person name="Arita M."/>
            <person name="Imose N."/>
            <person name="Musashino K."/>
            <person name="Yuuki H."/>
            <person name="Oshima A."/>
            <person name="Sasaki N."/>
            <person name="Aotsuka S."/>
            <person name="Yoshikawa Y."/>
            <person name="Matsunawa H."/>
            <person name="Ichihara T."/>
            <person name="Shiohata N."/>
            <person name="Sano S."/>
            <person name="Moriya S."/>
            <person name="Momiyama H."/>
            <person name="Satoh N."/>
            <person name="Takami S."/>
            <person name="Terashima Y."/>
            <person name="Suzuki O."/>
            <person name="Nakagawa S."/>
            <person name="Senoh A."/>
            <person name="Mizoguchi H."/>
            <person name="Goto Y."/>
            <person name="Shimizu F."/>
            <person name="Wakebe H."/>
            <person name="Hishigaki H."/>
            <person name="Watanabe T."/>
            <person name="Sugiyama A."/>
            <person name="Takemoto M."/>
            <person name="Kawakami B."/>
            <person name="Yamazaki M."/>
            <person name="Watanabe K."/>
            <person name="Kumagai A."/>
            <person name="Itakura S."/>
            <person name="Fukuzumi Y."/>
            <person name="Fujimori Y."/>
            <person name="Komiyama M."/>
            <person name="Tashiro H."/>
            <person name="Tanigami A."/>
            <person name="Fujiwara T."/>
            <person name="Ono T."/>
            <person name="Yamada K."/>
            <person name="Fujii Y."/>
            <person name="Ozaki K."/>
            <person name="Hirao M."/>
            <person name="Ohmori Y."/>
            <person name="Kawabata A."/>
            <person name="Hikiji T."/>
            <person name="Kobatake N."/>
            <person name="Inagaki H."/>
            <person name="Ikema Y."/>
            <person name="Okamoto S."/>
            <person name="Okitani R."/>
            <person name="Kawakami T."/>
            <person name="Noguchi S."/>
            <person name="Itoh T."/>
            <person name="Shigeta K."/>
            <person name="Senba T."/>
            <person name="Matsumura K."/>
            <person name="Nakajima Y."/>
            <person name="Mizuno T."/>
            <person name="Morinaga M."/>
            <person name="Sasaki M."/>
            <person name="Togashi T."/>
            <person name="Oyama M."/>
            <person name="Hata H."/>
            <person name="Watanabe M."/>
            <person name="Komatsu T."/>
            <person name="Mizushima-Sugano J."/>
            <person name="Satoh T."/>
            <person name="Shirai Y."/>
            <person name="Takahashi Y."/>
            <person name="Nakagawa K."/>
            <person name="Okumura K."/>
            <person name="Nagase T."/>
            <person name="Nomura N."/>
            <person name="Kikuchi H."/>
            <person name="Masuho Y."/>
            <person name="Yamashita R."/>
            <person name="Nakai K."/>
            <person name="Yada T."/>
            <person name="Nakamura Y."/>
            <person name="Ohara O."/>
            <person name="Isogai T."/>
            <person name="Sugano S."/>
        </authorList>
    </citation>
    <scope>NUCLEOTIDE SEQUENCE [LARGE SCALE MRNA] (ISOFORM 1)</scope>
    <source>
        <tissue>Esophagus</tissue>
    </source>
</reference>
<reference key="3">
    <citation type="journal article" date="2007" name="BMC Genomics">
        <title>The full-ORF clone resource of the German cDNA consortium.</title>
        <authorList>
            <person name="Bechtel S."/>
            <person name="Rosenfelder H."/>
            <person name="Duda A."/>
            <person name="Schmidt C.P."/>
            <person name="Ernst U."/>
            <person name="Wellenreuther R."/>
            <person name="Mehrle A."/>
            <person name="Schuster C."/>
            <person name="Bahr A."/>
            <person name="Bloecker H."/>
            <person name="Heubner D."/>
            <person name="Hoerlein A."/>
            <person name="Michel G."/>
            <person name="Wedler H."/>
            <person name="Koehrer K."/>
            <person name="Ottenwaelder B."/>
            <person name="Poustka A."/>
            <person name="Wiemann S."/>
            <person name="Schupp I."/>
        </authorList>
    </citation>
    <scope>NUCLEOTIDE SEQUENCE [LARGE SCALE MRNA] (ISOFORM 2)</scope>
    <source>
        <tissue>Stomach</tissue>
    </source>
</reference>
<reference key="4">
    <citation type="journal article" date="2006" name="Nature">
        <title>DNA sequence and analysis of human chromosome 8.</title>
        <authorList>
            <person name="Nusbaum C."/>
            <person name="Mikkelsen T.S."/>
            <person name="Zody M.C."/>
            <person name="Asakawa S."/>
            <person name="Taudien S."/>
            <person name="Garber M."/>
            <person name="Kodira C.D."/>
            <person name="Schueler M.G."/>
            <person name="Shimizu A."/>
            <person name="Whittaker C.A."/>
            <person name="Chang J.L."/>
            <person name="Cuomo C.A."/>
            <person name="Dewar K."/>
            <person name="FitzGerald M.G."/>
            <person name="Yang X."/>
            <person name="Allen N.R."/>
            <person name="Anderson S."/>
            <person name="Asakawa T."/>
            <person name="Blechschmidt K."/>
            <person name="Bloom T."/>
            <person name="Borowsky M.L."/>
            <person name="Butler J."/>
            <person name="Cook A."/>
            <person name="Corum B."/>
            <person name="DeArellano K."/>
            <person name="DeCaprio D."/>
            <person name="Dooley K.T."/>
            <person name="Dorris L. III"/>
            <person name="Engels R."/>
            <person name="Gloeckner G."/>
            <person name="Hafez N."/>
            <person name="Hagopian D.S."/>
            <person name="Hall J.L."/>
            <person name="Ishikawa S.K."/>
            <person name="Jaffe D.B."/>
            <person name="Kamat A."/>
            <person name="Kudoh J."/>
            <person name="Lehmann R."/>
            <person name="Lokitsang T."/>
            <person name="Macdonald P."/>
            <person name="Major J.E."/>
            <person name="Matthews C.D."/>
            <person name="Mauceli E."/>
            <person name="Menzel U."/>
            <person name="Mihalev A.H."/>
            <person name="Minoshima S."/>
            <person name="Murayama Y."/>
            <person name="Naylor J.W."/>
            <person name="Nicol R."/>
            <person name="Nguyen C."/>
            <person name="O'Leary S.B."/>
            <person name="O'Neill K."/>
            <person name="Parker S.C.J."/>
            <person name="Polley A."/>
            <person name="Raymond C.K."/>
            <person name="Reichwald K."/>
            <person name="Rodriguez J."/>
            <person name="Sasaki T."/>
            <person name="Schilhabel M."/>
            <person name="Siddiqui R."/>
            <person name="Smith C.L."/>
            <person name="Sneddon T.P."/>
            <person name="Talamas J.A."/>
            <person name="Tenzin P."/>
            <person name="Topham K."/>
            <person name="Venkataraman V."/>
            <person name="Wen G."/>
            <person name="Yamazaki S."/>
            <person name="Young S.K."/>
            <person name="Zeng Q."/>
            <person name="Zimmer A.R."/>
            <person name="Rosenthal A."/>
            <person name="Birren B.W."/>
            <person name="Platzer M."/>
            <person name="Shimizu N."/>
            <person name="Lander E.S."/>
        </authorList>
    </citation>
    <scope>NUCLEOTIDE SEQUENCE [LARGE SCALE GENOMIC DNA]</scope>
</reference>
<reference key="5">
    <citation type="submission" date="2005-07" db="EMBL/GenBank/DDBJ databases">
        <authorList>
            <person name="Mural R.J."/>
            <person name="Istrail S."/>
            <person name="Sutton G.G."/>
            <person name="Florea L."/>
            <person name="Halpern A.L."/>
            <person name="Mobarry C.M."/>
            <person name="Lippert R."/>
            <person name="Walenz B."/>
            <person name="Shatkay H."/>
            <person name="Dew I."/>
            <person name="Miller J.R."/>
            <person name="Flanigan M.J."/>
            <person name="Edwards N.J."/>
            <person name="Bolanos R."/>
            <person name="Fasulo D."/>
            <person name="Halldorsson B.V."/>
            <person name="Hannenhalli S."/>
            <person name="Turner R."/>
            <person name="Yooseph S."/>
            <person name="Lu F."/>
            <person name="Nusskern D.R."/>
            <person name="Shue B.C."/>
            <person name="Zheng X.H."/>
            <person name="Zhong F."/>
            <person name="Delcher A.L."/>
            <person name="Huson D.H."/>
            <person name="Kravitz S.A."/>
            <person name="Mouchard L."/>
            <person name="Reinert K."/>
            <person name="Remington K.A."/>
            <person name="Clark A.G."/>
            <person name="Waterman M.S."/>
            <person name="Eichler E.E."/>
            <person name="Adams M.D."/>
            <person name="Hunkapiller M.W."/>
            <person name="Myers E.W."/>
            <person name="Venter J.C."/>
        </authorList>
    </citation>
    <scope>NUCLEOTIDE SEQUENCE [LARGE SCALE GENOMIC DNA]</scope>
</reference>
<reference key="6">
    <citation type="journal article" date="2004" name="Genome Res.">
        <title>The status, quality, and expansion of the NIH full-length cDNA project: the Mammalian Gene Collection (MGC).</title>
        <authorList>
            <consortium name="The MGC Project Team"/>
        </authorList>
    </citation>
    <scope>NUCLEOTIDE SEQUENCE [LARGE SCALE MRNA] (ISOFORM 1)</scope>
    <source>
        <tissue>Pancreas</tissue>
    </source>
</reference>
<reference key="7">
    <citation type="journal article" date="2003" name="J. Biol. Chem.">
        <title>Evidence for a role of SNX16 in regulating traffic between the early and later endosomal compartments.</title>
        <authorList>
            <person name="Hanson B.J."/>
            <person name="Hong W."/>
        </authorList>
    </citation>
    <scope>FUNCTION</scope>
    <scope>SUBUNIT</scope>
    <scope>SUBCELLULAR LOCATION</scope>
    <scope>DOMAIN PX</scope>
    <scope>MUTAGENESIS OF TYR-145</scope>
    <scope>TISSUE SPECIFICITY</scope>
</reference>
<reference key="8">
    <citation type="journal article" date="2005" name="Nat. Cell Biol.">
        <title>Endosome-to-cytosol transport of viral nucleocapsids.</title>
        <authorList>
            <person name="Le Blanc I."/>
            <person name="Luyet P.P."/>
            <person name="Pons V."/>
            <person name="Ferguson C."/>
            <person name="Emans N."/>
            <person name="Petiot A."/>
            <person name="Mayran N."/>
            <person name="Demaurex N."/>
            <person name="Faure J."/>
            <person name="Sadoul R."/>
            <person name="Parton R.G."/>
            <person name="Gruenberg J."/>
        </authorList>
    </citation>
    <scope>FUNCTION</scope>
    <scope>SUBCELLULAR LOCATION</scope>
    <scope>MUTAGENESIS OF ARG-144</scope>
</reference>
<reference key="9">
    <citation type="journal article" date="2008" name="Proc. Natl. Acad. Sci. U.S.A.">
        <title>A quantitative atlas of mitotic phosphorylation.</title>
        <authorList>
            <person name="Dephoure N."/>
            <person name="Zhou C."/>
            <person name="Villen J."/>
            <person name="Beausoleil S.A."/>
            <person name="Bakalarski C.E."/>
            <person name="Elledge S.J."/>
            <person name="Gygi S.P."/>
        </authorList>
    </citation>
    <scope>IDENTIFICATION BY MASS SPECTROMETRY [LARGE SCALE ANALYSIS]</scope>
    <source>
        <tissue>Cervix carcinoma</tissue>
    </source>
</reference>
<reference key="10">
    <citation type="journal article" date="2009" name="Anal. Chem.">
        <title>Lys-N and trypsin cover complementary parts of the phosphoproteome in a refined SCX-based approach.</title>
        <authorList>
            <person name="Gauci S."/>
            <person name="Helbig A.O."/>
            <person name="Slijper M."/>
            <person name="Krijgsveld J."/>
            <person name="Heck A.J."/>
            <person name="Mohammed S."/>
        </authorList>
    </citation>
    <scope>IDENTIFICATION BY MASS SPECTROMETRY [LARGE SCALE ANALYSIS]</scope>
</reference>
<reference key="11">
    <citation type="journal article" date="2009" name="Sci. Signal.">
        <title>Quantitative phosphoproteomic analysis of T cell receptor signaling reveals system-wide modulation of protein-protein interactions.</title>
        <authorList>
            <person name="Mayya V."/>
            <person name="Lundgren D.H."/>
            <person name="Hwang S.-I."/>
            <person name="Rezaul K."/>
            <person name="Wu L."/>
            <person name="Eng J.K."/>
            <person name="Rodionov V."/>
            <person name="Han D.K."/>
        </authorList>
    </citation>
    <scope>IDENTIFICATION BY MASS SPECTROMETRY [LARGE SCALE ANALYSIS]</scope>
    <source>
        <tissue>Leukemic T-cell</tissue>
    </source>
</reference>
<reference key="12">
    <citation type="journal article" date="2014" name="J. Proteomics">
        <title>An enzyme assisted RP-RPLC approach for in-depth analysis of human liver phosphoproteome.</title>
        <authorList>
            <person name="Bian Y."/>
            <person name="Song C."/>
            <person name="Cheng K."/>
            <person name="Dong M."/>
            <person name="Wang F."/>
            <person name="Huang J."/>
            <person name="Sun D."/>
            <person name="Wang L."/>
            <person name="Ye M."/>
            <person name="Zou H."/>
        </authorList>
    </citation>
    <scope>IDENTIFICATION BY MASS SPECTROMETRY [LARGE SCALE ANALYSIS]</scope>
    <source>
        <tissue>Liver</tissue>
    </source>
</reference>
<accession>P57768</accession>
<accession>A8K4D8</accession>
<accession>Q658L0</accession>
<accession>Q8N4U3</accession>
<protein>
    <recommendedName>
        <fullName>Sorting nexin-16</fullName>
    </recommendedName>
</protein>
<sequence>MATPYVPVPMPIGNSASSFTTNRNQRSSSFGSVSTSSNSSKGQLEDSNMGNFKQTSVPDQMDNTSSVCSSPLIRTKFTGTASSIEYSTRPRDTEEQNPETVNWEDRPSTPTILGYEVMEERAKFTVYKILVKKTPEESWVVFRRYTDFSRLNDKLKEMFPGFRLALPPKRWFKDNYNADFLEDRQLGLQAFLQNLVAHKDIANCLAVREFLCLDDPPGPFDSLEESRAFCETLEETNYRLQKELLEKQKEMESLKKLLSEKQLHIDTLENRIRTLSLEPEESLDVSETEGEQILKVESSALEVDQDVLDEESRADNKPCLSFSEPENAVSEIEVAEVAYDAEED</sequence>
<name>SNX16_HUMAN</name>
<proteinExistence type="evidence at protein level"/>
<keyword id="KW-0002">3D-structure</keyword>
<keyword id="KW-0025">Alternative splicing</keyword>
<keyword id="KW-0175">Coiled coil</keyword>
<keyword id="KW-0963">Cytoplasm</keyword>
<keyword id="KW-0967">Endosome</keyword>
<keyword id="KW-0446">Lipid-binding</keyword>
<keyword id="KW-0458">Lysosome</keyword>
<keyword id="KW-0472">Membrane</keyword>
<keyword id="KW-0597">Phosphoprotein</keyword>
<keyword id="KW-0653">Protein transport</keyword>
<keyword id="KW-1267">Proteomics identification</keyword>
<keyword id="KW-1185">Reference proteome</keyword>
<keyword id="KW-0813">Transport</keyword>
<dbReference type="EMBL" id="AF305779">
    <property type="protein sequence ID" value="AAG25676.1"/>
    <property type="molecule type" value="mRNA"/>
</dbReference>
<dbReference type="EMBL" id="AK290903">
    <property type="protein sequence ID" value="BAF83592.1"/>
    <property type="molecule type" value="mRNA"/>
</dbReference>
<dbReference type="EMBL" id="AL833763">
    <property type="protein sequence ID" value="CAH56235.1"/>
    <property type="molecule type" value="mRNA"/>
</dbReference>
<dbReference type="EMBL" id="AC087349">
    <property type="status" value="NOT_ANNOTATED_CDS"/>
    <property type="molecule type" value="Genomic_DNA"/>
</dbReference>
<dbReference type="EMBL" id="AC132219">
    <property type="status" value="NOT_ANNOTATED_CDS"/>
    <property type="molecule type" value="Genomic_DNA"/>
</dbReference>
<dbReference type="EMBL" id="CH471068">
    <property type="protein sequence ID" value="EAW87108.1"/>
    <property type="molecule type" value="Genomic_DNA"/>
</dbReference>
<dbReference type="EMBL" id="CH471068">
    <property type="protein sequence ID" value="EAW87109.1"/>
    <property type="molecule type" value="Genomic_DNA"/>
</dbReference>
<dbReference type="EMBL" id="BC033630">
    <property type="protein sequence ID" value="AAH33630.1"/>
    <property type="molecule type" value="mRNA"/>
</dbReference>
<dbReference type="CCDS" id="CCDS6234.1">
    <molecule id="P57768-1"/>
</dbReference>
<dbReference type="CCDS" id="CCDS6235.1">
    <molecule id="P57768-2"/>
</dbReference>
<dbReference type="RefSeq" id="NP_071416.2">
    <molecule id="P57768-1"/>
    <property type="nucleotide sequence ID" value="NM_022133.3"/>
</dbReference>
<dbReference type="RefSeq" id="NP_690049.1">
    <molecule id="P57768-1"/>
    <property type="nucleotide sequence ID" value="NM_152836.3"/>
</dbReference>
<dbReference type="RefSeq" id="NP_690050.1">
    <molecule id="P57768-2"/>
    <property type="nucleotide sequence ID" value="NM_152837.3"/>
</dbReference>
<dbReference type="RefSeq" id="XP_047278041.1">
    <molecule id="P57768-1"/>
    <property type="nucleotide sequence ID" value="XM_047422085.1"/>
</dbReference>
<dbReference type="RefSeq" id="XP_047278043.1">
    <molecule id="P57768-2"/>
    <property type="nucleotide sequence ID" value="XM_047422087.1"/>
</dbReference>
<dbReference type="RefSeq" id="XP_054216951.1">
    <molecule id="P57768-1"/>
    <property type="nucleotide sequence ID" value="XM_054360976.1"/>
</dbReference>
<dbReference type="RefSeq" id="XP_054216954.1">
    <molecule id="P57768-2"/>
    <property type="nucleotide sequence ID" value="XM_054360979.1"/>
</dbReference>
<dbReference type="PDB" id="5GW0">
    <property type="method" value="X-ray"/>
    <property type="resolution" value="3.30 A"/>
    <property type="chains" value="A/B/C/D/E/F=100-278"/>
</dbReference>
<dbReference type="PDB" id="5GW1">
    <property type="method" value="X-ray"/>
    <property type="resolution" value="3.35 A"/>
    <property type="chains" value="A/B/C/D/E/F/G/H=100-278"/>
</dbReference>
<dbReference type="PDBsum" id="5GW0"/>
<dbReference type="PDBsum" id="5GW1"/>
<dbReference type="SMR" id="P57768"/>
<dbReference type="BioGRID" id="122051">
    <property type="interactions" value="18"/>
</dbReference>
<dbReference type="FunCoup" id="P57768">
    <property type="interactions" value="1741"/>
</dbReference>
<dbReference type="IntAct" id="P57768">
    <property type="interactions" value="12"/>
</dbReference>
<dbReference type="STRING" id="9606.ENSP00000379621"/>
<dbReference type="TCDB" id="3.A.34.1.1">
    <property type="family name" value="the sorting nexins of the escrt complexes (sn-escrt)"/>
</dbReference>
<dbReference type="GlyGen" id="P57768">
    <property type="glycosylation" value="1 site, 1 O-linked glycan (1 site)"/>
</dbReference>
<dbReference type="iPTMnet" id="P57768"/>
<dbReference type="PhosphoSitePlus" id="P57768"/>
<dbReference type="BioMuta" id="SNX16"/>
<dbReference type="DMDM" id="116242795"/>
<dbReference type="jPOST" id="P57768"/>
<dbReference type="MassIVE" id="P57768"/>
<dbReference type="PaxDb" id="9606-ENSP00000379621"/>
<dbReference type="PeptideAtlas" id="P57768"/>
<dbReference type="ProteomicsDB" id="57030">
    <molecule id="P57768-1"/>
</dbReference>
<dbReference type="ProteomicsDB" id="57031">
    <molecule id="P57768-2"/>
</dbReference>
<dbReference type="Pumba" id="P57768"/>
<dbReference type="Antibodypedia" id="12573">
    <property type="antibodies" value="134 antibodies from 28 providers"/>
</dbReference>
<dbReference type="DNASU" id="64089"/>
<dbReference type="Ensembl" id="ENST00000345957.9">
    <molecule id="P57768-1"/>
    <property type="protein sequence ID" value="ENSP00000322652.4"/>
    <property type="gene ID" value="ENSG00000104497.15"/>
</dbReference>
<dbReference type="Ensembl" id="ENST00000353788.8">
    <molecule id="P57768-2"/>
    <property type="protein sequence ID" value="ENSP00000322631.4"/>
    <property type="gene ID" value="ENSG00000104497.15"/>
</dbReference>
<dbReference type="Ensembl" id="ENST00000396330.6">
    <molecule id="P57768-1"/>
    <property type="protein sequence ID" value="ENSP00000379621.2"/>
    <property type="gene ID" value="ENSG00000104497.15"/>
</dbReference>
<dbReference type="GeneID" id="64089"/>
<dbReference type="KEGG" id="hsa:64089"/>
<dbReference type="MANE-Select" id="ENST00000345957.9">
    <property type="protein sequence ID" value="ENSP00000322652.4"/>
    <property type="RefSeq nucleotide sequence ID" value="NM_152836.3"/>
    <property type="RefSeq protein sequence ID" value="NP_690049.1"/>
</dbReference>
<dbReference type="UCSC" id="uc003ycn.4">
    <molecule id="P57768-1"/>
    <property type="organism name" value="human"/>
</dbReference>
<dbReference type="AGR" id="HGNC:14980"/>
<dbReference type="CTD" id="64089"/>
<dbReference type="DisGeNET" id="64089"/>
<dbReference type="GeneCards" id="SNX16"/>
<dbReference type="HGNC" id="HGNC:14980">
    <property type="gene designation" value="SNX16"/>
</dbReference>
<dbReference type="HPA" id="ENSG00000104497">
    <property type="expression patterns" value="Low tissue specificity"/>
</dbReference>
<dbReference type="MIM" id="614903">
    <property type="type" value="gene"/>
</dbReference>
<dbReference type="neXtProt" id="NX_P57768"/>
<dbReference type="OpenTargets" id="ENSG00000104497"/>
<dbReference type="PharmGKB" id="PA134972049"/>
<dbReference type="VEuPathDB" id="HostDB:ENSG00000104497"/>
<dbReference type="eggNOG" id="KOG2101">
    <property type="taxonomic scope" value="Eukaryota"/>
</dbReference>
<dbReference type="GeneTree" id="ENSGT00390000005651"/>
<dbReference type="HOGENOM" id="CLU_069154_0_0_1"/>
<dbReference type="InParanoid" id="P57768"/>
<dbReference type="OMA" id="NWEDRPA"/>
<dbReference type="OrthoDB" id="76516at2759"/>
<dbReference type="PAN-GO" id="P57768">
    <property type="GO annotations" value="7 GO annotations based on evolutionary models"/>
</dbReference>
<dbReference type="PhylomeDB" id="P57768"/>
<dbReference type="TreeFam" id="TF324116"/>
<dbReference type="PathwayCommons" id="P57768"/>
<dbReference type="SignaLink" id="P57768"/>
<dbReference type="BioGRID-ORCS" id="64089">
    <property type="hits" value="13 hits in 1154 CRISPR screens"/>
</dbReference>
<dbReference type="ChiTaRS" id="SNX16">
    <property type="organism name" value="human"/>
</dbReference>
<dbReference type="GenomeRNAi" id="64089"/>
<dbReference type="Pharos" id="P57768">
    <property type="development level" value="Tbio"/>
</dbReference>
<dbReference type="PRO" id="PR:P57768"/>
<dbReference type="Proteomes" id="UP000005640">
    <property type="component" value="Chromosome 8"/>
</dbReference>
<dbReference type="RNAct" id="P57768">
    <property type="molecule type" value="protein"/>
</dbReference>
<dbReference type="Bgee" id="ENSG00000104497">
    <property type="expression patterns" value="Expressed in sperm and 180 other cell types or tissues"/>
</dbReference>
<dbReference type="ExpressionAtlas" id="P57768">
    <property type="expression patterns" value="baseline and differential"/>
</dbReference>
<dbReference type="GO" id="GO:0005769">
    <property type="term" value="C:early endosome"/>
    <property type="evidence" value="ECO:0000314"/>
    <property type="project" value="UniProtKB"/>
</dbReference>
<dbReference type="GO" id="GO:0031901">
    <property type="term" value="C:early endosome membrane"/>
    <property type="evidence" value="ECO:0007669"/>
    <property type="project" value="UniProtKB-SubCell"/>
</dbReference>
<dbReference type="GO" id="GO:0010008">
    <property type="term" value="C:endosome membrane"/>
    <property type="evidence" value="ECO:0000314"/>
    <property type="project" value="UniProtKB"/>
</dbReference>
<dbReference type="GO" id="GO:0043231">
    <property type="term" value="C:intracellular membrane-bounded organelle"/>
    <property type="evidence" value="ECO:0000314"/>
    <property type="project" value="HPA"/>
</dbReference>
<dbReference type="GO" id="GO:0005770">
    <property type="term" value="C:late endosome"/>
    <property type="evidence" value="ECO:0000314"/>
    <property type="project" value="UniProtKB"/>
</dbReference>
<dbReference type="GO" id="GO:0031902">
    <property type="term" value="C:late endosome membrane"/>
    <property type="evidence" value="ECO:0007669"/>
    <property type="project" value="UniProtKB-SubCell"/>
</dbReference>
<dbReference type="GO" id="GO:0005764">
    <property type="term" value="C:lysosome"/>
    <property type="evidence" value="ECO:0007669"/>
    <property type="project" value="UniProtKB-SubCell"/>
</dbReference>
<dbReference type="GO" id="GO:0042802">
    <property type="term" value="F:identical protein binding"/>
    <property type="evidence" value="ECO:0000353"/>
    <property type="project" value="UniProtKB"/>
</dbReference>
<dbReference type="GO" id="GO:0035091">
    <property type="term" value="F:phosphatidylinositol binding"/>
    <property type="evidence" value="ECO:0000314"/>
    <property type="project" value="UniProtKB"/>
</dbReference>
<dbReference type="GO" id="GO:0045022">
    <property type="term" value="P:early endosome to late endosome transport"/>
    <property type="evidence" value="ECO:0000315"/>
    <property type="project" value="UniProtKB"/>
</dbReference>
<dbReference type="GO" id="GO:0008333">
    <property type="term" value="P:endosome to lysosome transport"/>
    <property type="evidence" value="ECO:0000315"/>
    <property type="project" value="UniProtKB"/>
</dbReference>
<dbReference type="GO" id="GO:0006622">
    <property type="term" value="P:protein targeting to lysosome"/>
    <property type="evidence" value="ECO:0000315"/>
    <property type="project" value="UniProtKB"/>
</dbReference>
<dbReference type="GO" id="GO:0001881">
    <property type="term" value="P:receptor recycling"/>
    <property type="evidence" value="ECO:0000318"/>
    <property type="project" value="GO_Central"/>
</dbReference>
<dbReference type="CDD" id="cd07276">
    <property type="entry name" value="PX_SNX16"/>
    <property type="match status" value="1"/>
</dbReference>
<dbReference type="FunFam" id="3.30.1520.10:FF:000011">
    <property type="entry name" value="Putative sorting nexin-16"/>
    <property type="match status" value="1"/>
</dbReference>
<dbReference type="Gene3D" id="3.30.1520.10">
    <property type="entry name" value="Phox-like domain"/>
    <property type="match status" value="1"/>
</dbReference>
<dbReference type="InterPro" id="IPR001683">
    <property type="entry name" value="PX_dom"/>
</dbReference>
<dbReference type="InterPro" id="IPR036871">
    <property type="entry name" value="PX_dom_sf"/>
</dbReference>
<dbReference type="InterPro" id="IPR037911">
    <property type="entry name" value="SNX16_PX"/>
</dbReference>
<dbReference type="InterPro" id="IPR051837">
    <property type="entry name" value="SortingNexin/PXDomain-PKLike"/>
</dbReference>
<dbReference type="PANTHER" id="PTHR22999">
    <property type="entry name" value="PX SERINE/THREONINE KINASE PXK"/>
    <property type="match status" value="1"/>
</dbReference>
<dbReference type="PANTHER" id="PTHR22999:SF23">
    <property type="entry name" value="SORTING NEXIN-16"/>
    <property type="match status" value="1"/>
</dbReference>
<dbReference type="Pfam" id="PF00787">
    <property type="entry name" value="PX"/>
    <property type="match status" value="1"/>
</dbReference>
<dbReference type="SMART" id="SM00312">
    <property type="entry name" value="PX"/>
    <property type="match status" value="1"/>
</dbReference>
<dbReference type="SUPFAM" id="SSF64268">
    <property type="entry name" value="PX domain"/>
    <property type="match status" value="1"/>
</dbReference>
<dbReference type="PROSITE" id="PS50195">
    <property type="entry name" value="PX"/>
    <property type="match status" value="1"/>
</dbReference>
<gene>
    <name type="primary">SNX16</name>
</gene>
<evidence type="ECO:0000250" key="1"/>
<evidence type="ECO:0000250" key="2">
    <source>
        <dbReference type="UniProtKB" id="Q8C080"/>
    </source>
</evidence>
<evidence type="ECO:0000255" key="3"/>
<evidence type="ECO:0000255" key="4">
    <source>
        <dbReference type="PROSITE-ProRule" id="PRU00147"/>
    </source>
</evidence>
<evidence type="ECO:0000256" key="5">
    <source>
        <dbReference type="SAM" id="MobiDB-lite"/>
    </source>
</evidence>
<evidence type="ECO:0000269" key="6">
    <source>
    </source>
</evidence>
<evidence type="ECO:0000269" key="7">
    <source>
    </source>
</evidence>
<evidence type="ECO:0000303" key="8">
    <source>
    </source>
</evidence>
<evidence type="ECO:0000305" key="9"/>
<evidence type="ECO:0007829" key="10">
    <source>
        <dbReference type="PDB" id="5GW0"/>
    </source>
</evidence>
<evidence type="ECO:0007829" key="11">
    <source>
        <dbReference type="PDB" id="5GW1"/>
    </source>
</evidence>